<name>SUV3_CHICK</name>
<protein>
    <recommendedName>
        <fullName>ATP-dependent RNA helicase SUPV3L1, mitochondrial</fullName>
        <ecNumber>3.6.4.13</ecNumber>
    </recommendedName>
    <alternativeName>
        <fullName>Suppressor of var1 3-like protein 1</fullName>
        <shortName>SUV3-like protein 1</shortName>
    </alternativeName>
</protein>
<gene>
    <name type="primary">SUPV3L1</name>
    <name type="ORF">RCJMB04_16a1</name>
</gene>
<comment type="function">
    <text evidence="1">Major helicase player in mitochondrial RNA metabolism. Component of the mitochondrial degradosome (mtEXO) complex, that degrades 3' overhang double-stranded RNA with a 3'-to-5' directionality in an ATP-dependent manner. ATPase and ATP-dependent multisubstrate helicase, able to unwind double-stranded (ds) DNA and RNA, and RNA/DNA heteroduplexes in the 5'-to-3' direction. Plays a role in the RNA surveillance system in mitochondria; regulates the stability of mature mRNAs, the removal of aberrantly formed mRNAs and the rapid degradation of non coding processing intermediates. Also implicated in recombination and chromatin maintenance pathways. May protect cells from apoptosis. Associates with mitochondrial DNA (By similarity).</text>
</comment>
<comment type="catalytic activity">
    <reaction>
        <text>ATP + H2O = ADP + phosphate + H(+)</text>
        <dbReference type="Rhea" id="RHEA:13065"/>
        <dbReference type="ChEBI" id="CHEBI:15377"/>
        <dbReference type="ChEBI" id="CHEBI:15378"/>
        <dbReference type="ChEBI" id="CHEBI:30616"/>
        <dbReference type="ChEBI" id="CHEBI:43474"/>
        <dbReference type="ChEBI" id="CHEBI:456216"/>
        <dbReference type="EC" id="3.6.4.13"/>
    </reaction>
</comment>
<comment type="cofactor">
    <cofactor evidence="1">
        <name>Mg(2+)</name>
        <dbReference type="ChEBI" id="CHEBI:18420"/>
    </cofactor>
    <cofactor evidence="1">
        <name>Mn(2+)</name>
        <dbReference type="ChEBI" id="CHEBI:29035"/>
    </cofactor>
</comment>
<comment type="subcellular location">
    <subcellularLocation>
        <location evidence="1">Nucleus</location>
    </subcellularLocation>
    <subcellularLocation>
        <location evidence="1">Mitochondrion matrix</location>
    </subcellularLocation>
    <subcellularLocation>
        <location evidence="1">Mitochondrion matrix</location>
        <location evidence="1">Mitochondrion nucleoid</location>
    </subcellularLocation>
</comment>
<comment type="similarity">
    <text evidence="6">Belongs to the helicase family.</text>
</comment>
<evidence type="ECO:0000250" key="1"/>
<evidence type="ECO:0000255" key="2"/>
<evidence type="ECO:0000255" key="3">
    <source>
        <dbReference type="PROSITE-ProRule" id="PRU00541"/>
    </source>
</evidence>
<evidence type="ECO:0000255" key="4">
    <source>
        <dbReference type="PROSITE-ProRule" id="PRU00542"/>
    </source>
</evidence>
<evidence type="ECO:0000256" key="5">
    <source>
        <dbReference type="SAM" id="MobiDB-lite"/>
    </source>
</evidence>
<evidence type="ECO:0000305" key="6"/>
<accession>Q5ZJT0</accession>
<keyword id="KW-0067">ATP-binding</keyword>
<keyword id="KW-0347">Helicase</keyword>
<keyword id="KW-0378">Hydrolase</keyword>
<keyword id="KW-0496">Mitochondrion</keyword>
<keyword id="KW-1135">Mitochondrion nucleoid</keyword>
<keyword id="KW-0547">Nucleotide-binding</keyword>
<keyword id="KW-0539">Nucleus</keyword>
<keyword id="KW-1185">Reference proteome</keyword>
<keyword id="KW-0809">Transit peptide</keyword>
<organism>
    <name type="scientific">Gallus gallus</name>
    <name type="common">Chicken</name>
    <dbReference type="NCBI Taxonomy" id="9031"/>
    <lineage>
        <taxon>Eukaryota</taxon>
        <taxon>Metazoa</taxon>
        <taxon>Chordata</taxon>
        <taxon>Craniata</taxon>
        <taxon>Vertebrata</taxon>
        <taxon>Euteleostomi</taxon>
        <taxon>Archelosauria</taxon>
        <taxon>Archosauria</taxon>
        <taxon>Dinosauria</taxon>
        <taxon>Saurischia</taxon>
        <taxon>Theropoda</taxon>
        <taxon>Coelurosauria</taxon>
        <taxon>Aves</taxon>
        <taxon>Neognathae</taxon>
        <taxon>Galloanserae</taxon>
        <taxon>Galliformes</taxon>
        <taxon>Phasianidae</taxon>
        <taxon>Phasianinae</taxon>
        <taxon>Gallus</taxon>
    </lineage>
</organism>
<dbReference type="EC" id="3.6.4.13"/>
<dbReference type="EMBL" id="AJ720354">
    <property type="protein sequence ID" value="CAG32013.1"/>
    <property type="molecule type" value="mRNA"/>
</dbReference>
<dbReference type="RefSeq" id="NP_001006498.1">
    <property type="nucleotide sequence ID" value="NM_001006498.1"/>
</dbReference>
<dbReference type="SMR" id="Q5ZJT0"/>
<dbReference type="FunCoup" id="Q5ZJT0">
    <property type="interactions" value="1252"/>
</dbReference>
<dbReference type="STRING" id="9031.ENSGALP00000039978"/>
<dbReference type="PaxDb" id="9031-ENSGALP00000039978"/>
<dbReference type="GeneID" id="423697"/>
<dbReference type="KEGG" id="gga:423697"/>
<dbReference type="CTD" id="6832"/>
<dbReference type="VEuPathDB" id="HostDB:geneid_423697"/>
<dbReference type="eggNOG" id="KOG0953">
    <property type="taxonomic scope" value="Eukaryota"/>
</dbReference>
<dbReference type="InParanoid" id="Q5ZJT0"/>
<dbReference type="OMA" id="QPANWYT"/>
<dbReference type="OrthoDB" id="6692397at2759"/>
<dbReference type="PhylomeDB" id="Q5ZJT0"/>
<dbReference type="PRO" id="PR:Q5ZJT0"/>
<dbReference type="Proteomes" id="UP000000539">
    <property type="component" value="Unassembled WGS sequence"/>
</dbReference>
<dbReference type="GO" id="GO:0045025">
    <property type="term" value="C:mitochondrial degradosome"/>
    <property type="evidence" value="ECO:0000250"/>
    <property type="project" value="UniProtKB"/>
</dbReference>
<dbReference type="GO" id="GO:0005759">
    <property type="term" value="C:mitochondrial matrix"/>
    <property type="evidence" value="ECO:0000250"/>
    <property type="project" value="UniProtKB"/>
</dbReference>
<dbReference type="GO" id="GO:0042645">
    <property type="term" value="C:mitochondrial nucleoid"/>
    <property type="evidence" value="ECO:0007669"/>
    <property type="project" value="UniProtKB-SubCell"/>
</dbReference>
<dbReference type="GO" id="GO:0005739">
    <property type="term" value="C:mitochondrion"/>
    <property type="evidence" value="ECO:0000250"/>
    <property type="project" value="UniProtKB"/>
</dbReference>
<dbReference type="GO" id="GO:0005634">
    <property type="term" value="C:nucleus"/>
    <property type="evidence" value="ECO:0000250"/>
    <property type="project" value="UniProtKB"/>
</dbReference>
<dbReference type="GO" id="GO:0034458">
    <property type="term" value="F:3'-5' RNA helicase activity"/>
    <property type="evidence" value="ECO:0000250"/>
    <property type="project" value="UniProtKB"/>
</dbReference>
<dbReference type="GO" id="GO:0005524">
    <property type="term" value="F:ATP binding"/>
    <property type="evidence" value="ECO:0007669"/>
    <property type="project" value="UniProtKB-KW"/>
</dbReference>
<dbReference type="GO" id="GO:0016887">
    <property type="term" value="F:ATP hydrolysis activity"/>
    <property type="evidence" value="ECO:0007669"/>
    <property type="project" value="RHEA"/>
</dbReference>
<dbReference type="GO" id="GO:0003677">
    <property type="term" value="F:DNA binding"/>
    <property type="evidence" value="ECO:0000250"/>
    <property type="project" value="UniProtKB"/>
</dbReference>
<dbReference type="GO" id="GO:0003678">
    <property type="term" value="F:DNA helicase activity"/>
    <property type="evidence" value="ECO:0000250"/>
    <property type="project" value="UniProtKB"/>
</dbReference>
<dbReference type="GO" id="GO:0003725">
    <property type="term" value="F:double-stranded RNA binding"/>
    <property type="evidence" value="ECO:0000250"/>
    <property type="project" value="UniProtKB"/>
</dbReference>
<dbReference type="GO" id="GO:0003724">
    <property type="term" value="F:RNA helicase activity"/>
    <property type="evidence" value="ECO:0000250"/>
    <property type="project" value="UniProtKB"/>
</dbReference>
<dbReference type="GO" id="GO:0006310">
    <property type="term" value="P:DNA recombination"/>
    <property type="evidence" value="ECO:0000250"/>
    <property type="project" value="UniProtKB"/>
</dbReference>
<dbReference type="GO" id="GO:0000958">
    <property type="term" value="P:mitochondrial mRNA catabolic process"/>
    <property type="evidence" value="ECO:0000250"/>
    <property type="project" value="UniProtKB"/>
</dbReference>
<dbReference type="GO" id="GO:0035946">
    <property type="term" value="P:mitochondrial mRNA surveillance"/>
    <property type="evidence" value="ECO:0000250"/>
    <property type="project" value="UniProtKB"/>
</dbReference>
<dbReference type="GO" id="GO:0035945">
    <property type="term" value="P:mitochondrial ncRNA surveillance"/>
    <property type="evidence" value="ECO:0000250"/>
    <property type="project" value="UniProtKB"/>
</dbReference>
<dbReference type="GO" id="GO:0000965">
    <property type="term" value="P:mitochondrial RNA 3'-end processing"/>
    <property type="evidence" value="ECO:0000250"/>
    <property type="project" value="UniProtKB"/>
</dbReference>
<dbReference type="GO" id="GO:2000827">
    <property type="term" value="P:mitochondrial RNA surveillance"/>
    <property type="evidence" value="ECO:0000250"/>
    <property type="project" value="UniProtKB"/>
</dbReference>
<dbReference type="GO" id="GO:0007005">
    <property type="term" value="P:mitochondrion organization"/>
    <property type="evidence" value="ECO:0000250"/>
    <property type="project" value="UniProtKB"/>
</dbReference>
<dbReference type="GO" id="GO:0043066">
    <property type="term" value="P:negative regulation of apoptotic process"/>
    <property type="evidence" value="ECO:0000250"/>
    <property type="project" value="UniProtKB"/>
</dbReference>
<dbReference type="GO" id="GO:0030307">
    <property type="term" value="P:positive regulation of cell growth"/>
    <property type="evidence" value="ECO:0000250"/>
    <property type="project" value="UniProtKB"/>
</dbReference>
<dbReference type="GO" id="GO:0000962">
    <property type="term" value="P:positive regulation of mitochondrial RNA catabolic process"/>
    <property type="evidence" value="ECO:0000250"/>
    <property type="project" value="UniProtKB"/>
</dbReference>
<dbReference type="GO" id="GO:0006401">
    <property type="term" value="P:RNA catabolic process"/>
    <property type="evidence" value="ECO:0000250"/>
    <property type="project" value="UniProtKB"/>
</dbReference>
<dbReference type="CDD" id="cd17913">
    <property type="entry name" value="DEXQc_Suv3"/>
    <property type="match status" value="1"/>
</dbReference>
<dbReference type="CDD" id="cd18805">
    <property type="entry name" value="SF2_C_suv3"/>
    <property type="match status" value="1"/>
</dbReference>
<dbReference type="FunFam" id="1.10.1740.140:FF:000001">
    <property type="entry name" value="ATP-dependent RNA helicase SUPV3L1, mitochondrial"/>
    <property type="match status" value="1"/>
</dbReference>
<dbReference type="FunFam" id="1.20.58.1080:FF:000001">
    <property type="entry name" value="ATP-dependent RNA helicase SUPV3L1, mitochondrial"/>
    <property type="match status" value="1"/>
</dbReference>
<dbReference type="FunFam" id="3.40.50.300:FF:000269">
    <property type="entry name" value="ATP-dependent RNA helicase SUPV3L1, mitochondrial"/>
    <property type="match status" value="1"/>
</dbReference>
<dbReference type="FunFam" id="3.40.50.300:FF:000446">
    <property type="entry name" value="ATP-dependent RNA helicase SUPV3L1, mitochondrial"/>
    <property type="match status" value="1"/>
</dbReference>
<dbReference type="Gene3D" id="1.10.1740.140">
    <property type="match status" value="1"/>
</dbReference>
<dbReference type="Gene3D" id="1.20.272.40">
    <property type="match status" value="1"/>
</dbReference>
<dbReference type="Gene3D" id="1.20.58.1080">
    <property type="match status" value="1"/>
</dbReference>
<dbReference type="Gene3D" id="3.40.50.300">
    <property type="entry name" value="P-loop containing nucleotide triphosphate hydrolases"/>
    <property type="match status" value="2"/>
</dbReference>
<dbReference type="InterPro" id="IPR055206">
    <property type="entry name" value="DEXQc_SUV3"/>
</dbReference>
<dbReference type="InterPro" id="IPR001650">
    <property type="entry name" value="Helicase_C-like"/>
</dbReference>
<dbReference type="InterPro" id="IPR027417">
    <property type="entry name" value="P-loop_NTPase"/>
</dbReference>
<dbReference type="InterPro" id="IPR050699">
    <property type="entry name" value="RNA-DNA_Helicase"/>
</dbReference>
<dbReference type="InterPro" id="IPR022192">
    <property type="entry name" value="SUV3_C"/>
</dbReference>
<dbReference type="InterPro" id="IPR041082">
    <property type="entry name" value="Suv3_C_1"/>
</dbReference>
<dbReference type="InterPro" id="IPR044774">
    <property type="entry name" value="Suv3_DEXQc"/>
</dbReference>
<dbReference type="InterPro" id="IPR041453">
    <property type="entry name" value="Suv3_N"/>
</dbReference>
<dbReference type="PANTHER" id="PTHR12131">
    <property type="entry name" value="ATP-DEPENDENT RNA AND DNA HELICASE"/>
    <property type="match status" value="1"/>
</dbReference>
<dbReference type="PANTHER" id="PTHR12131:SF1">
    <property type="entry name" value="ATP-DEPENDENT RNA HELICASE SUPV3L1, MITOCHONDRIAL-RELATED"/>
    <property type="match status" value="1"/>
</dbReference>
<dbReference type="Pfam" id="PF22527">
    <property type="entry name" value="DEXQc_Suv3"/>
    <property type="match status" value="1"/>
</dbReference>
<dbReference type="Pfam" id="PF00271">
    <property type="entry name" value="Helicase_C"/>
    <property type="match status" value="1"/>
</dbReference>
<dbReference type="Pfam" id="PF12513">
    <property type="entry name" value="SUV3_C"/>
    <property type="match status" value="1"/>
</dbReference>
<dbReference type="Pfam" id="PF18147">
    <property type="entry name" value="Suv3_C_1"/>
    <property type="match status" value="1"/>
</dbReference>
<dbReference type="Pfam" id="PF18114">
    <property type="entry name" value="Suv3_N"/>
    <property type="match status" value="1"/>
</dbReference>
<dbReference type="SMART" id="SM00490">
    <property type="entry name" value="HELICc"/>
    <property type="match status" value="1"/>
</dbReference>
<dbReference type="SUPFAM" id="SSF52540">
    <property type="entry name" value="P-loop containing nucleoside triphosphate hydrolases"/>
    <property type="match status" value="2"/>
</dbReference>
<dbReference type="PROSITE" id="PS51192">
    <property type="entry name" value="HELICASE_ATP_BIND_1"/>
    <property type="match status" value="1"/>
</dbReference>
<dbReference type="PROSITE" id="PS51194">
    <property type="entry name" value="HELICASE_CTER"/>
    <property type="match status" value="1"/>
</dbReference>
<proteinExistence type="evidence at transcript level"/>
<sequence>MRRCAWPLLRLSSRVGLALRHGGAVRLRQAAASSSSSSSGGGGLRAPDTSLFVPVPLKPVEGAAEEDVGAELTRPLDKGEVLKNLNKFYKRKEIQRLGTENGLDARLFHQAFISFRKYIMESSSVSADLHIILNDICCGAGHVDDLFPFFLRHAKQIFPMLDCMDDLRKISDLRLPPNWYPEARAIQRKIIFHAGPTNSGKTYHAIQRFLSAKSGIYCGPLKLLAHEIFQKSNAANVPCDLVTGEERVYASEDAKQASHIACTIEMCSTNTPYEVAVIDEIQMIRDPARGWAWTRALLGLCAEEIHVCGEGAAIDLVTELMYTTGEEVEVRNYKRLTPLTVLDYALESLDNLQPGDCIVCFSKNDIYSVSRQIEARGLECAVIYGSLPPGTKLEQAKKFNDPNDPCKILVATDAIGMGLNLCIKRIIFNSIVKPTVNEKGEKEIDSITTSQALQIAGRAGRFGSSFKQGEVTAMHRDDLLQLKEILSEAVPPVKAAGLHPTPEQIEMFAYHLPDATLSNLIDIFVSLSQVDGLYFVCNIDDFKFLADMIQHIPLNLRSRYVFCTAPLNRKEPFVCTTLLKFARQFSRNEPLTFDWLCRHTKWPLAPPKNIKELVHLEAVHDVFDLYLWLSYRFMDMFPDAALVRDIQKKLDDIIQIGVCNITKLIRASQSGAAPGAAEVMSEGFPLSRTKRDARTVSDHRDAKSAEPLSIALEVPGERRAKSLRTYRSATRQEDLKSHGRGSLANRLLREGLLTQEMLRQLESEWQDQHRSGRYGLASKRNDQSSSKEMGKKKK</sequence>
<reference key="1">
    <citation type="journal article" date="2005" name="Genome Biol.">
        <title>Full-length cDNAs from chicken bursal lymphocytes to facilitate gene function analysis.</title>
        <authorList>
            <person name="Caldwell R.B."/>
            <person name="Kierzek A.M."/>
            <person name="Arakawa H."/>
            <person name="Bezzubov Y."/>
            <person name="Zaim J."/>
            <person name="Fiedler P."/>
            <person name="Kutter S."/>
            <person name="Blagodatski A."/>
            <person name="Kostovska D."/>
            <person name="Koter M."/>
            <person name="Plachy J."/>
            <person name="Carninci P."/>
            <person name="Hayashizaki Y."/>
            <person name="Buerstedde J.-M."/>
        </authorList>
    </citation>
    <scope>NUCLEOTIDE SEQUENCE [LARGE SCALE MRNA]</scope>
    <source>
        <strain>CB</strain>
        <tissue>Bursa of Fabricius</tissue>
    </source>
</reference>
<feature type="transit peptide" description="Mitochondrion" evidence="2">
    <location>
        <begin position="1"/>
        <end position="30"/>
    </location>
</feature>
<feature type="chain" id="PRO_0000310548" description="ATP-dependent RNA helicase SUPV3L1, mitochondrial">
    <location>
        <begin position="31"/>
        <end position="794"/>
    </location>
</feature>
<feature type="domain" description="Helicase ATP-binding" evidence="3">
    <location>
        <begin position="182"/>
        <end position="322"/>
    </location>
</feature>
<feature type="domain" description="Helicase C-terminal" evidence="4">
    <location>
        <begin position="341"/>
        <end position="506"/>
    </location>
</feature>
<feature type="region of interest" description="Disordered" evidence="5">
    <location>
        <begin position="678"/>
        <end position="741"/>
    </location>
</feature>
<feature type="region of interest" description="Disordered" evidence="5">
    <location>
        <begin position="764"/>
        <end position="794"/>
    </location>
</feature>
<feature type="compositionally biased region" description="Basic and acidic residues" evidence="5">
    <location>
        <begin position="689"/>
        <end position="704"/>
    </location>
</feature>
<feature type="binding site" evidence="3">
    <location>
        <begin position="195"/>
        <end position="202"/>
    </location>
    <ligand>
        <name>ATP</name>
        <dbReference type="ChEBI" id="CHEBI:30616"/>
    </ligand>
</feature>